<keyword id="KW-0488">Methylation</keyword>
<keyword id="KW-0687">Ribonucleoprotein</keyword>
<keyword id="KW-0689">Ribosomal protein</keyword>
<keyword id="KW-0694">RNA-binding</keyword>
<keyword id="KW-0699">rRNA-binding</keyword>
<gene>
    <name evidence="1" type="primary">rplC</name>
    <name type="ordered locus">A1I_02035</name>
</gene>
<dbReference type="EMBL" id="CP000849">
    <property type="protein sequence ID" value="ABV78791.1"/>
    <property type="molecule type" value="Genomic_DNA"/>
</dbReference>
<dbReference type="RefSeq" id="WP_011477721.1">
    <property type="nucleotide sequence ID" value="NC_009883.1"/>
</dbReference>
<dbReference type="SMR" id="A8GVB4"/>
<dbReference type="KEGG" id="rbo:A1I_02035"/>
<dbReference type="HOGENOM" id="CLU_044142_2_0_5"/>
<dbReference type="GO" id="GO:1990904">
    <property type="term" value="C:ribonucleoprotein complex"/>
    <property type="evidence" value="ECO:0007669"/>
    <property type="project" value="UniProtKB-KW"/>
</dbReference>
<dbReference type="GO" id="GO:0005840">
    <property type="term" value="C:ribosome"/>
    <property type="evidence" value="ECO:0007669"/>
    <property type="project" value="UniProtKB-KW"/>
</dbReference>
<dbReference type="GO" id="GO:0019843">
    <property type="term" value="F:rRNA binding"/>
    <property type="evidence" value="ECO:0007669"/>
    <property type="project" value="UniProtKB-UniRule"/>
</dbReference>
<dbReference type="GO" id="GO:0003735">
    <property type="term" value="F:structural constituent of ribosome"/>
    <property type="evidence" value="ECO:0007669"/>
    <property type="project" value="InterPro"/>
</dbReference>
<dbReference type="GO" id="GO:0006412">
    <property type="term" value="P:translation"/>
    <property type="evidence" value="ECO:0007669"/>
    <property type="project" value="UniProtKB-UniRule"/>
</dbReference>
<dbReference type="FunFam" id="2.40.30.10:FF:000004">
    <property type="entry name" value="50S ribosomal protein L3"/>
    <property type="match status" value="1"/>
</dbReference>
<dbReference type="Gene3D" id="3.30.160.810">
    <property type="match status" value="1"/>
</dbReference>
<dbReference type="Gene3D" id="2.40.30.10">
    <property type="entry name" value="Translation factors"/>
    <property type="match status" value="1"/>
</dbReference>
<dbReference type="HAMAP" id="MF_01325_B">
    <property type="entry name" value="Ribosomal_uL3_B"/>
    <property type="match status" value="1"/>
</dbReference>
<dbReference type="InterPro" id="IPR000597">
    <property type="entry name" value="Ribosomal_uL3"/>
</dbReference>
<dbReference type="InterPro" id="IPR019927">
    <property type="entry name" value="Ribosomal_uL3_bac/org-type"/>
</dbReference>
<dbReference type="InterPro" id="IPR019926">
    <property type="entry name" value="Ribosomal_uL3_CS"/>
</dbReference>
<dbReference type="InterPro" id="IPR009000">
    <property type="entry name" value="Transl_B-barrel_sf"/>
</dbReference>
<dbReference type="NCBIfam" id="TIGR03625">
    <property type="entry name" value="L3_bact"/>
    <property type="match status" value="1"/>
</dbReference>
<dbReference type="PANTHER" id="PTHR11229">
    <property type="entry name" value="50S RIBOSOMAL PROTEIN L3"/>
    <property type="match status" value="1"/>
</dbReference>
<dbReference type="PANTHER" id="PTHR11229:SF16">
    <property type="entry name" value="LARGE RIBOSOMAL SUBUNIT PROTEIN UL3C"/>
    <property type="match status" value="1"/>
</dbReference>
<dbReference type="Pfam" id="PF00297">
    <property type="entry name" value="Ribosomal_L3"/>
    <property type="match status" value="1"/>
</dbReference>
<dbReference type="SUPFAM" id="SSF50447">
    <property type="entry name" value="Translation proteins"/>
    <property type="match status" value="1"/>
</dbReference>
<dbReference type="PROSITE" id="PS00474">
    <property type="entry name" value="RIBOSOMAL_L3"/>
    <property type="match status" value="1"/>
</dbReference>
<comment type="function">
    <text evidence="1">One of the primary rRNA binding proteins, it binds directly near the 3'-end of the 23S rRNA, where it nucleates assembly of the 50S subunit.</text>
</comment>
<comment type="subunit">
    <text evidence="1">Part of the 50S ribosomal subunit. Forms a cluster with proteins L14 and L19.</text>
</comment>
<comment type="PTM">
    <text evidence="1">Methylated by PrmB.</text>
</comment>
<comment type="similarity">
    <text evidence="1">Belongs to the universal ribosomal protein uL3 family.</text>
</comment>
<name>RL3_RICB8</name>
<organism>
    <name type="scientific">Rickettsia bellii (strain OSU 85-389)</name>
    <dbReference type="NCBI Taxonomy" id="391896"/>
    <lineage>
        <taxon>Bacteria</taxon>
        <taxon>Pseudomonadati</taxon>
        <taxon>Pseudomonadota</taxon>
        <taxon>Alphaproteobacteria</taxon>
        <taxon>Rickettsiales</taxon>
        <taxon>Rickettsiaceae</taxon>
        <taxon>Rickettsieae</taxon>
        <taxon>Rickettsia</taxon>
        <taxon>belli group</taxon>
    </lineage>
</organism>
<protein>
    <recommendedName>
        <fullName evidence="1">Large ribosomal subunit protein uL3</fullName>
    </recommendedName>
    <alternativeName>
        <fullName evidence="2">50S ribosomal protein L3</fullName>
    </alternativeName>
</protein>
<evidence type="ECO:0000255" key="1">
    <source>
        <dbReference type="HAMAP-Rule" id="MF_01325"/>
    </source>
</evidence>
<evidence type="ECO:0000305" key="2"/>
<reference key="1">
    <citation type="submission" date="2007-09" db="EMBL/GenBank/DDBJ databases">
        <title>Complete genome sequencing of Rickettsia bellii.</title>
        <authorList>
            <person name="Madan A."/>
            <person name="Lee H."/>
            <person name="Madan A."/>
            <person name="Yoon J.-G."/>
            <person name="Ryu G.-Y."/>
            <person name="Dasch G."/>
            <person name="Ereemeva M."/>
        </authorList>
    </citation>
    <scope>NUCLEOTIDE SEQUENCE [LARGE SCALE GENOMIC DNA]</scope>
    <source>
        <strain>OSU 85-389</strain>
    </source>
</reference>
<sequence>MRTGIIAQKVGMTSVFNNNGKRVPLTLVKVDDCQVVGHKIAEKHGYNALVIGIKDKKISRVTKPMKQVFANAKVSPKTKLKEFRISEDNFIDIAASLEVDHFTAGQFIDVTATTIGKGFAGSMKRHNFRGLEASHGVSISHRSHGSTGQRQDPGKVFKGKKMAGHMGCSQVTIQNLKIFAIDKEQGLIMIQGSIPGHKGSYISIKDAIKKISITA</sequence>
<proteinExistence type="inferred from homology"/>
<feature type="chain" id="PRO_1000052126" description="Large ribosomal subunit protein uL3">
    <location>
        <begin position="1"/>
        <end position="215"/>
    </location>
</feature>
<feature type="modified residue" description="N5-methylglutamine" evidence="1">
    <location>
        <position position="151"/>
    </location>
</feature>
<accession>A8GVB4</accession>